<dbReference type="EMBL" id="CP000034">
    <property type="protein sequence ID" value="ABB60420.1"/>
    <property type="molecule type" value="Genomic_DNA"/>
</dbReference>
<dbReference type="RefSeq" id="WP_000622418.1">
    <property type="nucleotide sequence ID" value="NC_007606.1"/>
</dbReference>
<dbReference type="RefSeq" id="YP_401909.1">
    <property type="nucleotide sequence ID" value="NC_007606.1"/>
</dbReference>
<dbReference type="SMR" id="Q32JT7"/>
<dbReference type="STRING" id="300267.SDY_0188"/>
<dbReference type="EnsemblBacteria" id="ABB60420">
    <property type="protein sequence ID" value="ABB60420"/>
    <property type="gene ID" value="SDY_0188"/>
</dbReference>
<dbReference type="GeneID" id="93777253"/>
<dbReference type="KEGG" id="sdy:SDY_0188"/>
<dbReference type="PATRIC" id="fig|300267.13.peg.218"/>
<dbReference type="HOGENOM" id="CLU_073981_2_1_6"/>
<dbReference type="Proteomes" id="UP000002716">
    <property type="component" value="Chromosome"/>
</dbReference>
<dbReference type="GO" id="GO:0005829">
    <property type="term" value="C:cytosol"/>
    <property type="evidence" value="ECO:0007669"/>
    <property type="project" value="GOC"/>
</dbReference>
<dbReference type="GO" id="GO:0043023">
    <property type="term" value="F:ribosomal large subunit binding"/>
    <property type="evidence" value="ECO:0007669"/>
    <property type="project" value="TreeGrafter"/>
</dbReference>
<dbReference type="GO" id="GO:0002184">
    <property type="term" value="P:cytoplasmic translational termination"/>
    <property type="evidence" value="ECO:0007669"/>
    <property type="project" value="TreeGrafter"/>
</dbReference>
<dbReference type="CDD" id="cd00520">
    <property type="entry name" value="RRF"/>
    <property type="match status" value="1"/>
</dbReference>
<dbReference type="FunFam" id="1.10.132.20:FF:000001">
    <property type="entry name" value="Ribosome-recycling factor"/>
    <property type="match status" value="1"/>
</dbReference>
<dbReference type="FunFam" id="3.30.1360.40:FF:000001">
    <property type="entry name" value="Ribosome-recycling factor"/>
    <property type="match status" value="1"/>
</dbReference>
<dbReference type="Gene3D" id="3.30.1360.40">
    <property type="match status" value="1"/>
</dbReference>
<dbReference type="Gene3D" id="1.10.132.20">
    <property type="entry name" value="Ribosome-recycling factor"/>
    <property type="match status" value="1"/>
</dbReference>
<dbReference type="HAMAP" id="MF_00040">
    <property type="entry name" value="RRF"/>
    <property type="match status" value="1"/>
</dbReference>
<dbReference type="InterPro" id="IPR002661">
    <property type="entry name" value="Ribosome_recyc_fac"/>
</dbReference>
<dbReference type="InterPro" id="IPR023584">
    <property type="entry name" value="Ribosome_recyc_fac_dom"/>
</dbReference>
<dbReference type="InterPro" id="IPR036191">
    <property type="entry name" value="RRF_sf"/>
</dbReference>
<dbReference type="NCBIfam" id="TIGR00496">
    <property type="entry name" value="frr"/>
    <property type="match status" value="1"/>
</dbReference>
<dbReference type="PANTHER" id="PTHR20982:SF3">
    <property type="entry name" value="MITOCHONDRIAL RIBOSOME RECYCLING FACTOR PSEUDO 1"/>
    <property type="match status" value="1"/>
</dbReference>
<dbReference type="PANTHER" id="PTHR20982">
    <property type="entry name" value="RIBOSOME RECYCLING FACTOR"/>
    <property type="match status" value="1"/>
</dbReference>
<dbReference type="Pfam" id="PF01765">
    <property type="entry name" value="RRF"/>
    <property type="match status" value="1"/>
</dbReference>
<dbReference type="SUPFAM" id="SSF55194">
    <property type="entry name" value="Ribosome recycling factor, RRF"/>
    <property type="match status" value="1"/>
</dbReference>
<organism>
    <name type="scientific">Shigella dysenteriae serotype 1 (strain Sd197)</name>
    <dbReference type="NCBI Taxonomy" id="300267"/>
    <lineage>
        <taxon>Bacteria</taxon>
        <taxon>Pseudomonadati</taxon>
        <taxon>Pseudomonadota</taxon>
        <taxon>Gammaproteobacteria</taxon>
        <taxon>Enterobacterales</taxon>
        <taxon>Enterobacteriaceae</taxon>
        <taxon>Shigella</taxon>
    </lineage>
</organism>
<evidence type="ECO:0000255" key="1">
    <source>
        <dbReference type="HAMAP-Rule" id="MF_00040"/>
    </source>
</evidence>
<keyword id="KW-0007">Acetylation</keyword>
<keyword id="KW-0963">Cytoplasm</keyword>
<keyword id="KW-0648">Protein biosynthesis</keyword>
<keyword id="KW-1185">Reference proteome</keyword>
<reference key="1">
    <citation type="journal article" date="2005" name="Nucleic Acids Res.">
        <title>Genome dynamics and diversity of Shigella species, the etiologic agents of bacillary dysentery.</title>
        <authorList>
            <person name="Yang F."/>
            <person name="Yang J."/>
            <person name="Zhang X."/>
            <person name="Chen L."/>
            <person name="Jiang Y."/>
            <person name="Yan Y."/>
            <person name="Tang X."/>
            <person name="Wang J."/>
            <person name="Xiong Z."/>
            <person name="Dong J."/>
            <person name="Xue Y."/>
            <person name="Zhu Y."/>
            <person name="Xu X."/>
            <person name="Sun L."/>
            <person name="Chen S."/>
            <person name="Nie H."/>
            <person name="Peng J."/>
            <person name="Xu J."/>
            <person name="Wang Y."/>
            <person name="Yuan Z."/>
            <person name="Wen Y."/>
            <person name="Yao Z."/>
            <person name="Shen Y."/>
            <person name="Qiang B."/>
            <person name="Hou Y."/>
            <person name="Yu J."/>
            <person name="Jin Q."/>
        </authorList>
    </citation>
    <scope>NUCLEOTIDE SEQUENCE [LARGE SCALE GENOMIC DNA]</scope>
    <source>
        <strain>Sd197</strain>
    </source>
</reference>
<protein>
    <recommendedName>
        <fullName evidence="1">Ribosome-recycling factor</fullName>
        <shortName evidence="1">RRF</shortName>
    </recommendedName>
    <alternativeName>
        <fullName evidence="1">Ribosome-releasing factor</fullName>
    </alternativeName>
</protein>
<gene>
    <name evidence="1" type="primary">frr</name>
    <name type="ordered locus">SDY_0188</name>
</gene>
<name>RRF_SHIDS</name>
<comment type="function">
    <text evidence="1">Responsible for the release of ribosomes from messenger RNA at the termination of protein biosynthesis. May increase the efficiency of translation by recycling ribosomes from one round of translation to another.</text>
</comment>
<comment type="subcellular location">
    <subcellularLocation>
        <location evidence="1">Cytoplasm</location>
    </subcellularLocation>
</comment>
<comment type="similarity">
    <text evidence="1">Belongs to the RRF family.</text>
</comment>
<accession>Q32JT7</accession>
<sequence>MISDIRKDAEVRMDKCVEAFKTQISKIRTGRASPSLLDGIVVEYYGTPTPLRQLASVTVEDSRTLKINVFDRSMSPAVEKAIMASDLGLNPNSAGSDIRVPLPPLTEERRKDLTKIVRGEAEQARVAVRNVRRDANDKVKALLKDKEISEDDDRRSQDDVQKLTDAAIKKIEAALADKEAELMQF</sequence>
<feature type="chain" id="PRO_1000003267" description="Ribosome-recycling factor">
    <location>
        <begin position="1"/>
        <end position="185"/>
    </location>
</feature>
<feature type="modified residue" description="N6-acetyllysine" evidence="1">
    <location>
        <position position="162"/>
    </location>
</feature>
<proteinExistence type="inferred from homology"/>